<keyword id="KW-0064">Aspartyl protease</keyword>
<keyword id="KW-1003">Cell membrane</keyword>
<keyword id="KW-0378">Hydrolase</keyword>
<keyword id="KW-0472">Membrane</keyword>
<keyword id="KW-0645">Protease</keyword>
<keyword id="KW-1185">Reference proteome</keyword>
<keyword id="KW-0812">Transmembrane</keyword>
<keyword id="KW-1133">Transmembrane helix</keyword>
<accession>Q8DQ64</accession>
<reference key="1">
    <citation type="journal article" date="2001" name="J. Bacteriol.">
        <title>Genome of the bacterium Streptococcus pneumoniae strain R6.</title>
        <authorList>
            <person name="Hoskins J."/>
            <person name="Alborn W.E. Jr."/>
            <person name="Arnold J."/>
            <person name="Blaszczak L.C."/>
            <person name="Burgett S."/>
            <person name="DeHoff B.S."/>
            <person name="Estrem S.T."/>
            <person name="Fritz L."/>
            <person name="Fu D.-J."/>
            <person name="Fuller W."/>
            <person name="Geringer C."/>
            <person name="Gilmour R."/>
            <person name="Glass J.S."/>
            <person name="Khoja H."/>
            <person name="Kraft A.R."/>
            <person name="Lagace R.E."/>
            <person name="LeBlanc D.J."/>
            <person name="Lee L.N."/>
            <person name="Lefkowitz E.J."/>
            <person name="Lu J."/>
            <person name="Matsushima P."/>
            <person name="McAhren S.M."/>
            <person name="McHenney M."/>
            <person name="McLeaster K."/>
            <person name="Mundy C.W."/>
            <person name="Nicas T.I."/>
            <person name="Norris F.H."/>
            <person name="O'Gara M."/>
            <person name="Peery R.B."/>
            <person name="Robertson G.T."/>
            <person name="Rockey P."/>
            <person name="Sun P.-M."/>
            <person name="Winkler M.E."/>
            <person name="Yang Y."/>
            <person name="Young-Bellido M."/>
            <person name="Zhao G."/>
            <person name="Zook C.A."/>
            <person name="Baltz R.H."/>
            <person name="Jaskunas S.R."/>
            <person name="Rosteck P.R. Jr."/>
            <person name="Skatrud P.L."/>
            <person name="Glass J.I."/>
        </authorList>
    </citation>
    <scope>NUCLEOTIDE SEQUENCE [LARGE SCALE GENOMIC DNA]</scope>
    <source>
        <strain>ATCC BAA-255 / R6</strain>
    </source>
</reference>
<evidence type="ECO:0000255" key="1">
    <source>
        <dbReference type="HAMAP-Rule" id="MF_00161"/>
    </source>
</evidence>
<organism>
    <name type="scientific">Streptococcus pneumoniae (strain ATCC BAA-255 / R6)</name>
    <dbReference type="NCBI Taxonomy" id="171101"/>
    <lineage>
        <taxon>Bacteria</taxon>
        <taxon>Bacillati</taxon>
        <taxon>Bacillota</taxon>
        <taxon>Bacilli</taxon>
        <taxon>Lactobacillales</taxon>
        <taxon>Streptococcaceae</taxon>
        <taxon>Streptococcus</taxon>
    </lineage>
</organism>
<comment type="function">
    <text evidence="1">This protein specifically catalyzes the removal of signal peptides from prolipoproteins.</text>
</comment>
<comment type="catalytic activity">
    <reaction evidence="1">
        <text>Release of signal peptides from bacterial membrane prolipoproteins. Hydrolyzes -Xaa-Yaa-Zaa-|-(S,diacylglyceryl)Cys-, in which Xaa is hydrophobic (preferably Leu), and Yaa (Ala or Ser) and Zaa (Gly or Ala) have small, neutral side chains.</text>
        <dbReference type="EC" id="3.4.23.36"/>
    </reaction>
</comment>
<comment type="pathway">
    <text evidence="1">Protein modification; lipoprotein biosynthesis (signal peptide cleavage).</text>
</comment>
<comment type="subcellular location">
    <subcellularLocation>
        <location evidence="1">Cell membrane</location>
        <topology evidence="1">Multi-pass membrane protein</topology>
    </subcellularLocation>
</comment>
<comment type="similarity">
    <text evidence="1">Belongs to the peptidase A8 family.</text>
</comment>
<dbReference type="EC" id="3.4.23.36" evidence="1"/>
<dbReference type="EMBL" id="AE007317">
    <property type="protein sequence ID" value="AAK99633.1"/>
    <property type="molecule type" value="Genomic_DNA"/>
</dbReference>
<dbReference type="PIR" id="C95107">
    <property type="entry name" value="C95107"/>
</dbReference>
<dbReference type="PIR" id="E97975">
    <property type="entry name" value="E97975"/>
</dbReference>
<dbReference type="RefSeq" id="NP_358423.1">
    <property type="nucleotide sequence ID" value="NC_003098.1"/>
</dbReference>
<dbReference type="RefSeq" id="WP_000745389.1">
    <property type="nucleotide sequence ID" value="NC_003098.1"/>
</dbReference>
<dbReference type="SMR" id="Q8DQ64"/>
<dbReference type="STRING" id="171101.spr0829"/>
<dbReference type="KEGG" id="spr:spr0829"/>
<dbReference type="PATRIC" id="fig|171101.6.peg.918"/>
<dbReference type="eggNOG" id="COG0597">
    <property type="taxonomic scope" value="Bacteria"/>
</dbReference>
<dbReference type="HOGENOM" id="CLU_083252_3_3_9"/>
<dbReference type="UniPathway" id="UPA00665"/>
<dbReference type="Proteomes" id="UP000000586">
    <property type="component" value="Chromosome"/>
</dbReference>
<dbReference type="GO" id="GO:0005886">
    <property type="term" value="C:plasma membrane"/>
    <property type="evidence" value="ECO:0000318"/>
    <property type="project" value="GO_Central"/>
</dbReference>
<dbReference type="GO" id="GO:0004190">
    <property type="term" value="F:aspartic-type endopeptidase activity"/>
    <property type="evidence" value="ECO:0007669"/>
    <property type="project" value="UniProtKB-UniRule"/>
</dbReference>
<dbReference type="GO" id="GO:0004175">
    <property type="term" value="F:endopeptidase activity"/>
    <property type="evidence" value="ECO:0000318"/>
    <property type="project" value="GO_Central"/>
</dbReference>
<dbReference type="GO" id="GO:0006508">
    <property type="term" value="P:proteolysis"/>
    <property type="evidence" value="ECO:0007669"/>
    <property type="project" value="UniProtKB-KW"/>
</dbReference>
<dbReference type="HAMAP" id="MF_00161">
    <property type="entry name" value="LspA"/>
    <property type="match status" value="1"/>
</dbReference>
<dbReference type="InterPro" id="IPR001872">
    <property type="entry name" value="Peptidase_A8"/>
</dbReference>
<dbReference type="NCBIfam" id="TIGR00077">
    <property type="entry name" value="lspA"/>
    <property type="match status" value="1"/>
</dbReference>
<dbReference type="PANTHER" id="PTHR33695">
    <property type="entry name" value="LIPOPROTEIN SIGNAL PEPTIDASE"/>
    <property type="match status" value="1"/>
</dbReference>
<dbReference type="PANTHER" id="PTHR33695:SF1">
    <property type="entry name" value="LIPOPROTEIN SIGNAL PEPTIDASE"/>
    <property type="match status" value="1"/>
</dbReference>
<dbReference type="Pfam" id="PF01252">
    <property type="entry name" value="Peptidase_A8"/>
    <property type="match status" value="1"/>
</dbReference>
<dbReference type="PRINTS" id="PR00781">
    <property type="entry name" value="LIPOSIGPTASE"/>
</dbReference>
<dbReference type="PROSITE" id="PS00855">
    <property type="entry name" value="SPASE_II"/>
    <property type="match status" value="1"/>
</dbReference>
<protein>
    <recommendedName>
        <fullName evidence="1">Lipoprotein signal peptidase</fullName>
        <ecNumber evidence="1">3.4.23.36</ecNumber>
    </recommendedName>
    <alternativeName>
        <fullName evidence="1">Prolipoprotein signal peptidase</fullName>
    </alternativeName>
    <alternativeName>
        <fullName evidence="1">Signal peptidase II</fullName>
        <shortName evidence="1">SPase II</shortName>
    </alternativeName>
</protein>
<gene>
    <name evidence="1" type="primary">lspA</name>
    <name type="ordered locus">spr0829</name>
</gene>
<sequence length="153" mass="17150">MKKRAIVAVIVLLLIGLDQLVKSYIVQQIPLGEVRSWIPNFVSLTYLQNRGAAFSILQDQQLLFAVITLVVVIGAIWYLHKHMEDSFWMVLGLTLIIAGGLGNFIDRVSQGFVVDMFHLDFINFAIFNVADSYLTVGVIILLIAMLKEEINGN</sequence>
<proteinExistence type="inferred from homology"/>
<feature type="chain" id="PRO_0000289439" description="Lipoprotein signal peptidase">
    <location>
        <begin position="1"/>
        <end position="153"/>
    </location>
</feature>
<feature type="transmembrane region" description="Helical" evidence="1">
    <location>
        <begin position="6"/>
        <end position="26"/>
    </location>
</feature>
<feature type="transmembrane region" description="Helical" evidence="1">
    <location>
        <begin position="60"/>
        <end position="80"/>
    </location>
</feature>
<feature type="transmembrane region" description="Helical" evidence="1">
    <location>
        <begin position="85"/>
        <end position="105"/>
    </location>
</feature>
<feature type="transmembrane region" description="Helical" evidence="1">
    <location>
        <begin position="124"/>
        <end position="144"/>
    </location>
</feature>
<feature type="active site" evidence="1">
    <location>
        <position position="115"/>
    </location>
</feature>
<feature type="active site" evidence="1">
    <location>
        <position position="131"/>
    </location>
</feature>
<name>LSPA_STRR6</name>